<gene>
    <name evidence="1" type="primary">adk</name>
    <name type="ordered locus">STM0488</name>
</gene>
<feature type="chain" id="PRO_0000158842" description="Adenylate kinase">
    <location>
        <begin position="1"/>
        <end position="214"/>
    </location>
</feature>
<feature type="region of interest" description="NMP" evidence="1">
    <location>
        <begin position="30"/>
        <end position="59"/>
    </location>
</feature>
<feature type="region of interest" description="LID">
    <location>
        <begin position="122"/>
        <end position="159"/>
    </location>
</feature>
<feature type="binding site" evidence="1">
    <location>
        <begin position="10"/>
        <end position="15"/>
    </location>
    <ligand>
        <name>ATP</name>
        <dbReference type="ChEBI" id="CHEBI:30616"/>
    </ligand>
</feature>
<feature type="binding site" evidence="1">
    <location>
        <position position="31"/>
    </location>
    <ligand>
        <name>AMP</name>
        <dbReference type="ChEBI" id="CHEBI:456215"/>
    </ligand>
</feature>
<feature type="binding site" evidence="1">
    <location>
        <position position="36"/>
    </location>
    <ligand>
        <name>AMP</name>
        <dbReference type="ChEBI" id="CHEBI:456215"/>
    </ligand>
</feature>
<feature type="binding site" evidence="1">
    <location>
        <begin position="57"/>
        <end position="59"/>
    </location>
    <ligand>
        <name>AMP</name>
        <dbReference type="ChEBI" id="CHEBI:456215"/>
    </ligand>
</feature>
<feature type="binding site" evidence="1">
    <location>
        <begin position="85"/>
        <end position="88"/>
    </location>
    <ligand>
        <name>AMP</name>
        <dbReference type="ChEBI" id="CHEBI:456215"/>
    </ligand>
</feature>
<feature type="binding site" evidence="1">
    <location>
        <position position="92"/>
    </location>
    <ligand>
        <name>AMP</name>
        <dbReference type="ChEBI" id="CHEBI:456215"/>
    </ligand>
</feature>
<feature type="binding site" evidence="1">
    <location>
        <position position="123"/>
    </location>
    <ligand>
        <name>ATP</name>
        <dbReference type="ChEBI" id="CHEBI:30616"/>
    </ligand>
</feature>
<feature type="binding site" evidence="1">
    <location>
        <begin position="132"/>
        <end position="133"/>
    </location>
    <ligand>
        <name>ATP</name>
        <dbReference type="ChEBI" id="CHEBI:30616"/>
    </ligand>
</feature>
<feature type="binding site" evidence="1">
    <location>
        <position position="156"/>
    </location>
    <ligand>
        <name>AMP</name>
        <dbReference type="ChEBI" id="CHEBI:456215"/>
    </ligand>
</feature>
<feature type="binding site" evidence="1">
    <location>
        <position position="167"/>
    </location>
    <ligand>
        <name>AMP</name>
        <dbReference type="ChEBI" id="CHEBI:456215"/>
    </ligand>
</feature>
<feature type="binding site" evidence="1">
    <location>
        <position position="200"/>
    </location>
    <ligand>
        <name>ATP</name>
        <dbReference type="ChEBI" id="CHEBI:30616"/>
    </ligand>
</feature>
<reference key="1">
    <citation type="journal article" date="1995" name="J. Bacteriol.">
        <title>Isolation and characterization of adenylate kinase (adk) mutations in Salmonella typhimurium which block the ability of glycine betaine to function as an osmoprotectant.</title>
        <authorList>
            <person name="Gutierrez J.A."/>
            <person name="Csonka L.N."/>
        </authorList>
    </citation>
    <scope>NUCLEOTIDE SEQUENCE [GENOMIC DNA]</scope>
    <source>
        <strain>LT2</strain>
    </source>
</reference>
<reference key="2">
    <citation type="journal article" date="2001" name="Nature">
        <title>Complete genome sequence of Salmonella enterica serovar Typhimurium LT2.</title>
        <authorList>
            <person name="McClelland M."/>
            <person name="Sanderson K.E."/>
            <person name="Spieth J."/>
            <person name="Clifton S.W."/>
            <person name="Latreille P."/>
            <person name="Courtney L."/>
            <person name="Porwollik S."/>
            <person name="Ali J."/>
            <person name="Dante M."/>
            <person name="Du F."/>
            <person name="Hou S."/>
            <person name="Layman D."/>
            <person name="Leonard S."/>
            <person name="Nguyen C."/>
            <person name="Scott K."/>
            <person name="Holmes A."/>
            <person name="Grewal N."/>
            <person name="Mulvaney E."/>
            <person name="Ryan E."/>
            <person name="Sun H."/>
            <person name="Florea L."/>
            <person name="Miller W."/>
            <person name="Stoneking T."/>
            <person name="Nhan M."/>
            <person name="Waterston R."/>
            <person name="Wilson R.K."/>
        </authorList>
    </citation>
    <scope>NUCLEOTIDE SEQUENCE [LARGE SCALE GENOMIC DNA]</scope>
    <source>
        <strain>LT2 / SGSC1412 / ATCC 700720</strain>
    </source>
</reference>
<name>KAD_SALTY</name>
<accession>P0A1V4</accession>
<accession>P37407</accession>
<comment type="function">
    <text evidence="1">Catalyzes the reversible transfer of the terminal phosphate group between ATP and AMP. Plays an important role in cellular energy homeostasis and in adenine nucleotide metabolism.</text>
</comment>
<comment type="catalytic activity">
    <reaction evidence="1">
        <text>AMP + ATP = 2 ADP</text>
        <dbReference type="Rhea" id="RHEA:12973"/>
        <dbReference type="ChEBI" id="CHEBI:30616"/>
        <dbReference type="ChEBI" id="CHEBI:456215"/>
        <dbReference type="ChEBI" id="CHEBI:456216"/>
        <dbReference type="EC" id="2.7.4.3"/>
    </reaction>
</comment>
<comment type="pathway">
    <text evidence="1">Purine metabolism; AMP biosynthesis via salvage pathway; AMP from ADP: step 1/1.</text>
</comment>
<comment type="subunit">
    <text>Monomer.</text>
</comment>
<comment type="subcellular location">
    <subcellularLocation>
        <location>Cytoplasm</location>
    </subcellularLocation>
</comment>
<comment type="domain">
    <text evidence="1">Consists of three domains, a large central CORE domain and two small peripheral domains, NMPbind and LID, which undergo movements during catalysis. The LID domain closes over the site of phosphoryl transfer upon ATP binding. Assembling and dissambling the active center during each catalytic cycle provides an effective means to prevent ATP hydrolysis.</text>
</comment>
<comment type="similarity">
    <text evidence="1">Belongs to the adenylate kinase family.</text>
</comment>
<keyword id="KW-0067">ATP-binding</keyword>
<keyword id="KW-0963">Cytoplasm</keyword>
<keyword id="KW-0418">Kinase</keyword>
<keyword id="KW-0545">Nucleotide biosynthesis</keyword>
<keyword id="KW-0547">Nucleotide-binding</keyword>
<keyword id="KW-1185">Reference proteome</keyword>
<keyword id="KW-0808">Transferase</keyword>
<proteinExistence type="inferred from homology"/>
<organism>
    <name type="scientific">Salmonella typhimurium (strain LT2 / SGSC1412 / ATCC 700720)</name>
    <dbReference type="NCBI Taxonomy" id="99287"/>
    <lineage>
        <taxon>Bacteria</taxon>
        <taxon>Pseudomonadati</taxon>
        <taxon>Pseudomonadota</taxon>
        <taxon>Gammaproteobacteria</taxon>
        <taxon>Enterobacterales</taxon>
        <taxon>Enterobacteriaceae</taxon>
        <taxon>Salmonella</taxon>
    </lineage>
</organism>
<protein>
    <recommendedName>
        <fullName evidence="1">Adenylate kinase</fullName>
        <shortName evidence="1">AK</shortName>
        <ecNumber evidence="1">2.7.4.3</ecNumber>
    </recommendedName>
    <alternativeName>
        <fullName evidence="1">ATP-AMP transphosphorylase</fullName>
    </alternativeName>
    <alternativeName>
        <fullName evidence="1">ATP:AMP phosphotransferase</fullName>
    </alternativeName>
    <alternativeName>
        <fullName evidence="1">Adenylate monophosphate kinase</fullName>
    </alternativeName>
</protein>
<evidence type="ECO:0000255" key="1">
    <source>
        <dbReference type="HAMAP-Rule" id="MF_00235"/>
    </source>
</evidence>
<sequence>MRIILLGAPGAGKGTQAQFIMEKYGIPQISTGDMLRAAVKSGSELGKQAKDIMDAGKLVTDELVIALVKERIAQEDCRNGFLLDGFPRTIPQADAMKEAGIVVDYVLEFDVPDELIVDRIVGRRVHAASGRVYHVKFNPPKVEGKDDVTGEDLTTRKDDQEETVRKRLVEYHQMTAPLIGYYQKEAEAGNTKYAKVDGTQAVADVRAALEKILG</sequence>
<dbReference type="EC" id="2.7.4.3" evidence="1"/>
<dbReference type="EMBL" id="L26246">
    <property type="protein sequence ID" value="AAA65969.1"/>
    <property type="molecule type" value="Genomic_DNA"/>
</dbReference>
<dbReference type="EMBL" id="AE006468">
    <property type="protein sequence ID" value="AAL19442.1"/>
    <property type="molecule type" value="Genomic_DNA"/>
</dbReference>
<dbReference type="RefSeq" id="NP_459483.1">
    <property type="nucleotide sequence ID" value="NC_003197.2"/>
</dbReference>
<dbReference type="RefSeq" id="WP_001220237.1">
    <property type="nucleotide sequence ID" value="NC_003197.2"/>
</dbReference>
<dbReference type="SMR" id="P0A1V4"/>
<dbReference type="STRING" id="99287.STM0488"/>
<dbReference type="PaxDb" id="99287-STM0488"/>
<dbReference type="GeneID" id="1252008"/>
<dbReference type="KEGG" id="stm:STM0488"/>
<dbReference type="PATRIC" id="fig|99287.12.peg.521"/>
<dbReference type="HOGENOM" id="CLU_032354_1_2_6"/>
<dbReference type="OMA" id="VYHEQTA"/>
<dbReference type="PhylomeDB" id="P0A1V4"/>
<dbReference type="BioCyc" id="SENT99287:STM0488-MONOMER"/>
<dbReference type="UniPathway" id="UPA00588">
    <property type="reaction ID" value="UER00649"/>
</dbReference>
<dbReference type="Proteomes" id="UP000001014">
    <property type="component" value="Chromosome"/>
</dbReference>
<dbReference type="GO" id="GO:0005737">
    <property type="term" value="C:cytoplasm"/>
    <property type="evidence" value="ECO:0000318"/>
    <property type="project" value="GO_Central"/>
</dbReference>
<dbReference type="GO" id="GO:0005829">
    <property type="term" value="C:cytosol"/>
    <property type="evidence" value="ECO:0000318"/>
    <property type="project" value="GO_Central"/>
</dbReference>
<dbReference type="GO" id="GO:0004017">
    <property type="term" value="F:adenylate kinase activity"/>
    <property type="evidence" value="ECO:0000318"/>
    <property type="project" value="GO_Central"/>
</dbReference>
<dbReference type="GO" id="GO:0005524">
    <property type="term" value="F:ATP binding"/>
    <property type="evidence" value="ECO:0007669"/>
    <property type="project" value="UniProtKB-UniRule"/>
</dbReference>
<dbReference type="GO" id="GO:0004550">
    <property type="term" value="F:nucleoside diphosphate kinase activity"/>
    <property type="evidence" value="ECO:0000318"/>
    <property type="project" value="GO_Central"/>
</dbReference>
<dbReference type="GO" id="GO:0044209">
    <property type="term" value="P:AMP salvage"/>
    <property type="evidence" value="ECO:0007669"/>
    <property type="project" value="UniProtKB-UniRule"/>
</dbReference>
<dbReference type="GO" id="GO:0009132">
    <property type="term" value="P:nucleoside diphosphate metabolic process"/>
    <property type="evidence" value="ECO:0000318"/>
    <property type="project" value="GO_Central"/>
</dbReference>
<dbReference type="GO" id="GO:0009123">
    <property type="term" value="P:nucleoside monophosphate metabolic process"/>
    <property type="evidence" value="ECO:0000318"/>
    <property type="project" value="GO_Central"/>
</dbReference>
<dbReference type="CDD" id="cd01428">
    <property type="entry name" value="ADK"/>
    <property type="match status" value="1"/>
</dbReference>
<dbReference type="FunFam" id="3.40.50.300:FF:000106">
    <property type="entry name" value="Adenylate kinase mitochondrial"/>
    <property type="match status" value="1"/>
</dbReference>
<dbReference type="Gene3D" id="3.40.50.300">
    <property type="entry name" value="P-loop containing nucleotide triphosphate hydrolases"/>
    <property type="match status" value="1"/>
</dbReference>
<dbReference type="HAMAP" id="MF_00235">
    <property type="entry name" value="Adenylate_kinase_Adk"/>
    <property type="match status" value="1"/>
</dbReference>
<dbReference type="InterPro" id="IPR006259">
    <property type="entry name" value="Adenyl_kin_sub"/>
</dbReference>
<dbReference type="InterPro" id="IPR000850">
    <property type="entry name" value="Adenylat/UMP-CMP_kin"/>
</dbReference>
<dbReference type="InterPro" id="IPR033690">
    <property type="entry name" value="Adenylat_kinase_CS"/>
</dbReference>
<dbReference type="InterPro" id="IPR007862">
    <property type="entry name" value="Adenylate_kinase_lid-dom"/>
</dbReference>
<dbReference type="InterPro" id="IPR027417">
    <property type="entry name" value="P-loop_NTPase"/>
</dbReference>
<dbReference type="NCBIfam" id="TIGR01351">
    <property type="entry name" value="adk"/>
    <property type="match status" value="1"/>
</dbReference>
<dbReference type="NCBIfam" id="NF001379">
    <property type="entry name" value="PRK00279.1-1"/>
    <property type="match status" value="1"/>
</dbReference>
<dbReference type="NCBIfam" id="NF001380">
    <property type="entry name" value="PRK00279.1-2"/>
    <property type="match status" value="1"/>
</dbReference>
<dbReference type="NCBIfam" id="NF001381">
    <property type="entry name" value="PRK00279.1-3"/>
    <property type="match status" value="1"/>
</dbReference>
<dbReference type="NCBIfam" id="NF011100">
    <property type="entry name" value="PRK14527.1"/>
    <property type="match status" value="1"/>
</dbReference>
<dbReference type="PANTHER" id="PTHR23359">
    <property type="entry name" value="NUCLEOTIDE KINASE"/>
    <property type="match status" value="1"/>
</dbReference>
<dbReference type="Pfam" id="PF00406">
    <property type="entry name" value="ADK"/>
    <property type="match status" value="1"/>
</dbReference>
<dbReference type="Pfam" id="PF05191">
    <property type="entry name" value="ADK_lid"/>
    <property type="match status" value="1"/>
</dbReference>
<dbReference type="PRINTS" id="PR00094">
    <property type="entry name" value="ADENYLTKNASE"/>
</dbReference>
<dbReference type="SUPFAM" id="SSF52540">
    <property type="entry name" value="P-loop containing nucleoside triphosphate hydrolases"/>
    <property type="match status" value="1"/>
</dbReference>
<dbReference type="PROSITE" id="PS00113">
    <property type="entry name" value="ADENYLATE_KINASE"/>
    <property type="match status" value="1"/>
</dbReference>